<protein>
    <recommendedName>
        <fullName>Reticulon-4 receptor-like 2</fullName>
    </recommendedName>
    <alternativeName>
        <fullName>Nogo receptor-like 3</fullName>
    </alternativeName>
    <alternativeName>
        <fullName evidence="11">Nogo-66 receptor homolog 1</fullName>
    </alternativeName>
    <alternativeName>
        <fullName>Nogo-66 receptor-related protein 2</fullName>
        <shortName evidence="12">NgR2</shortName>
    </alternativeName>
</protein>
<comment type="function">
    <text evidence="1 6 9 10">Cell surface receptor that plays a functionally redundant role in the inhibition of neurite outgrowth mediated by MAG (PubMed:15673660). Plays a functionally redundant role in postnatal brain development. Contributes to normal axon migration across the brain midline and normal formation of the corpus callosum. Does not seem to play a significant role in regulating axon regeneration in the adult central nervous system (By similarity). Protects motoneurons against apoptosis; protection against apoptosis is probably mediated by MAG (PubMed:26335717). Like other family members, plays a role in restricting the number dendritic spines and the number of synapses that are formed during brain development (PubMed:22325200). Signaling mediates activation of Rho and downstream reorganization of the actin cytoskeleton (PubMed:22325200).</text>
</comment>
<comment type="subunit">
    <text evidence="6 7 8 13">Interaction with MAG is controversial, and may be indirect (Probable). Interacts with MAG (PubMed:15673660, PubMed:19420245, PubMed:21308849). Does not interact with OMG and RTN4 (PubMed:15673660).</text>
</comment>
<comment type="subcellular location">
    <subcellularLocation>
        <location evidence="5 6 7">Cell membrane</location>
        <topology evidence="13">Lipid-anchor</topology>
        <topology evidence="13">GPI-anchor</topology>
    </subcellularLocation>
    <subcellularLocation>
        <location evidence="1">Cell projection</location>
        <location evidence="1">Dendrite</location>
    </subcellularLocation>
    <subcellularLocation>
        <location evidence="5 6">Perikaryon</location>
    </subcellularLocation>
    <subcellularLocation>
        <location evidence="5 6">Cell projection</location>
        <location evidence="5 6">Axon</location>
    </subcellularLocation>
    <subcellularLocation>
        <location evidence="6">Membrane raft</location>
    </subcellularLocation>
    <text evidence="1 5 6">Localized to the surface of neurons, including axons (PubMed:12694398, PubMed:15673660). Detected close to synapses, but is excluded from synapses (By similarity).</text>
</comment>
<comment type="tissue specificity">
    <text evidence="5 6">Detected in adult brain, in neocortex, hippocampus, striatum and dorsal root ganglion neurons, and in retina (at protein level) (PubMed:15673660). In brain, detected in cerebral cortex and hippocampus. Weak or no expression detected in the cerebellum, thalamus or striatum (PubMed:12694398).</text>
</comment>
<comment type="developmental stage">
    <text evidence="6">Expression is high in adult, but very low in neonate dorsal root ganglion neurons (at protein level).</text>
</comment>
<comment type="PTM">
    <text evidence="2">Undergoes zinc metalloproteinase-mediated ectodomain shedding in neuroblastoma cells; is released both as a full-length ectodomain and an N-terminal fragment containing the leucine-rich repeat (LRR) region of the protein.</text>
</comment>
<comment type="PTM">
    <text evidence="7 8">N-glycosylated (PubMed:19420245, PubMed:21308849). O-glycosylated (PubMed:19420245). Contains terminal sialic acid groups on its glycan chains (PubMed:19420245).</text>
</comment>
<comment type="similarity">
    <text evidence="13">Belongs to the Nogo receptor family.</text>
</comment>
<accession>Q80WD1</accession>
<name>R4RL2_RAT</name>
<dbReference type="EMBL" id="AF532860">
    <property type="protein sequence ID" value="AAP21837.1"/>
    <property type="molecule type" value="mRNA"/>
</dbReference>
<dbReference type="RefSeq" id="NP_852045.1">
    <property type="nucleotide sequence ID" value="NM_181380.2"/>
</dbReference>
<dbReference type="PDB" id="4P8S">
    <property type="method" value="X-ray"/>
    <property type="resolution" value="1.80 A"/>
    <property type="chains" value="A=29-310"/>
</dbReference>
<dbReference type="PDB" id="4P91">
    <property type="method" value="X-ray"/>
    <property type="resolution" value="2.10 A"/>
    <property type="chains" value="A=29-330"/>
</dbReference>
<dbReference type="PDBsum" id="4P8S"/>
<dbReference type="PDBsum" id="4P91"/>
<dbReference type="SMR" id="Q80WD1"/>
<dbReference type="FunCoup" id="Q80WD1">
    <property type="interactions" value="273"/>
</dbReference>
<dbReference type="STRING" id="10116.ENSRNOP00000032922"/>
<dbReference type="GlyCosmos" id="Q80WD1">
    <property type="glycosylation" value="3 sites, No reported glycans"/>
</dbReference>
<dbReference type="GlyGen" id="Q80WD1">
    <property type="glycosylation" value="4 sites"/>
</dbReference>
<dbReference type="iPTMnet" id="Q80WD1"/>
<dbReference type="PhosphoSitePlus" id="Q80WD1"/>
<dbReference type="PaxDb" id="10116-ENSRNOP00000032922"/>
<dbReference type="ABCD" id="Q80WD1">
    <property type="antibodies" value="1 sequenced antibody"/>
</dbReference>
<dbReference type="GeneID" id="311169"/>
<dbReference type="KEGG" id="rno:311169"/>
<dbReference type="UCSC" id="RGD:727797">
    <property type="organism name" value="rat"/>
</dbReference>
<dbReference type="AGR" id="RGD:727797"/>
<dbReference type="CTD" id="349667"/>
<dbReference type="RGD" id="727797">
    <property type="gene designation" value="Rtn4rl2"/>
</dbReference>
<dbReference type="VEuPathDB" id="HostDB:ENSRNOG00000021513"/>
<dbReference type="eggNOG" id="KOG0619">
    <property type="taxonomic scope" value="Eukaryota"/>
</dbReference>
<dbReference type="HOGENOM" id="CLU_000288_18_6_1"/>
<dbReference type="InParanoid" id="Q80WD1"/>
<dbReference type="OrthoDB" id="66331at9989"/>
<dbReference type="PhylomeDB" id="Q80WD1"/>
<dbReference type="TreeFam" id="TF330080"/>
<dbReference type="Reactome" id="R-RNO-163125">
    <property type="pathway name" value="Post-translational modification: synthesis of GPI-anchored proteins"/>
</dbReference>
<dbReference type="EvolutionaryTrace" id="Q80WD1"/>
<dbReference type="PRO" id="PR:Q80WD1"/>
<dbReference type="Proteomes" id="UP000002494">
    <property type="component" value="Chromosome 3"/>
</dbReference>
<dbReference type="Bgee" id="ENSRNOG00000021513">
    <property type="expression patterns" value="Expressed in frontal cortex and 11 other cell types or tissues"/>
</dbReference>
<dbReference type="GO" id="GO:0030424">
    <property type="term" value="C:axon"/>
    <property type="evidence" value="ECO:0000314"/>
    <property type="project" value="UniProtKB"/>
</dbReference>
<dbReference type="GO" id="GO:0009986">
    <property type="term" value="C:cell surface"/>
    <property type="evidence" value="ECO:0000314"/>
    <property type="project" value="UniProtKB"/>
</dbReference>
<dbReference type="GO" id="GO:0030425">
    <property type="term" value="C:dendrite"/>
    <property type="evidence" value="ECO:0007669"/>
    <property type="project" value="UniProtKB-SubCell"/>
</dbReference>
<dbReference type="GO" id="GO:0009897">
    <property type="term" value="C:external side of plasma membrane"/>
    <property type="evidence" value="ECO:0000314"/>
    <property type="project" value="RGD"/>
</dbReference>
<dbReference type="GO" id="GO:0031012">
    <property type="term" value="C:extracellular matrix"/>
    <property type="evidence" value="ECO:0000318"/>
    <property type="project" value="GO_Central"/>
</dbReference>
<dbReference type="GO" id="GO:0005615">
    <property type="term" value="C:extracellular space"/>
    <property type="evidence" value="ECO:0000318"/>
    <property type="project" value="GO_Central"/>
</dbReference>
<dbReference type="GO" id="GO:0045121">
    <property type="term" value="C:membrane raft"/>
    <property type="evidence" value="ECO:0000314"/>
    <property type="project" value="UniProtKB"/>
</dbReference>
<dbReference type="GO" id="GO:0043005">
    <property type="term" value="C:neuron projection"/>
    <property type="evidence" value="ECO:0000314"/>
    <property type="project" value="UniProtKB"/>
</dbReference>
<dbReference type="GO" id="GO:0043204">
    <property type="term" value="C:perikaryon"/>
    <property type="evidence" value="ECO:0000314"/>
    <property type="project" value="UniProtKB"/>
</dbReference>
<dbReference type="GO" id="GO:0005886">
    <property type="term" value="C:plasma membrane"/>
    <property type="evidence" value="ECO:0000250"/>
    <property type="project" value="UniProtKB"/>
</dbReference>
<dbReference type="GO" id="GO:0038023">
    <property type="term" value="F:signaling receptor activity"/>
    <property type="evidence" value="ECO:0000315"/>
    <property type="project" value="UniProtKB"/>
</dbReference>
<dbReference type="GO" id="GO:0007166">
    <property type="term" value="P:cell surface receptor signaling pathway"/>
    <property type="evidence" value="ECO:0000315"/>
    <property type="project" value="UniProtKB"/>
</dbReference>
<dbReference type="GO" id="GO:0022038">
    <property type="term" value="P:corpus callosum development"/>
    <property type="evidence" value="ECO:0000266"/>
    <property type="project" value="RGD"/>
</dbReference>
<dbReference type="GO" id="GO:0010977">
    <property type="term" value="P:negative regulation of neuron projection development"/>
    <property type="evidence" value="ECO:0000315"/>
    <property type="project" value="UniProtKB"/>
</dbReference>
<dbReference type="FunFam" id="3.80.10.10:FF:000018">
    <property type="entry name" value="Reticulon 4 receptor"/>
    <property type="match status" value="1"/>
</dbReference>
<dbReference type="Gene3D" id="3.80.10.10">
    <property type="entry name" value="Ribonuclease Inhibitor"/>
    <property type="match status" value="1"/>
</dbReference>
<dbReference type="InterPro" id="IPR000483">
    <property type="entry name" value="Cys-rich_flank_reg_C"/>
</dbReference>
<dbReference type="InterPro" id="IPR001611">
    <property type="entry name" value="Leu-rich_rpt"/>
</dbReference>
<dbReference type="InterPro" id="IPR003591">
    <property type="entry name" value="Leu-rich_rpt_typical-subtyp"/>
</dbReference>
<dbReference type="InterPro" id="IPR032675">
    <property type="entry name" value="LRR_dom_sf"/>
</dbReference>
<dbReference type="InterPro" id="IPR050541">
    <property type="entry name" value="LRR_TM_domain-containing"/>
</dbReference>
<dbReference type="PANTHER" id="PTHR24369">
    <property type="entry name" value="ANTIGEN BSP, PUTATIVE-RELATED"/>
    <property type="match status" value="1"/>
</dbReference>
<dbReference type="PANTHER" id="PTHR24369:SF196">
    <property type="entry name" value="RETICULON 4 RECEPTOR LIKE 1"/>
    <property type="match status" value="1"/>
</dbReference>
<dbReference type="Pfam" id="PF13855">
    <property type="entry name" value="LRR_8"/>
    <property type="match status" value="2"/>
</dbReference>
<dbReference type="SMART" id="SM00369">
    <property type="entry name" value="LRR_TYP"/>
    <property type="match status" value="8"/>
</dbReference>
<dbReference type="SMART" id="SM00082">
    <property type="entry name" value="LRRCT"/>
    <property type="match status" value="1"/>
</dbReference>
<dbReference type="SUPFAM" id="SSF52058">
    <property type="entry name" value="L domain-like"/>
    <property type="match status" value="1"/>
</dbReference>
<feature type="signal peptide" evidence="3">
    <location>
        <begin position="1"/>
        <end position="30"/>
    </location>
</feature>
<feature type="chain" id="PRO_0000046052" description="Reticulon-4 receptor-like 2">
    <location>
        <begin position="31"/>
        <end position="390"/>
    </location>
</feature>
<feature type="propeptide" id="PRO_0000046053" description="Removed in mature form" evidence="3">
    <location>
        <begin position="391"/>
        <end position="420"/>
    </location>
</feature>
<feature type="domain" description="LRRNT">
    <location>
        <begin position="31"/>
        <end position="60"/>
    </location>
</feature>
<feature type="repeat" description="LRR 1">
    <location>
        <begin position="61"/>
        <end position="82"/>
    </location>
</feature>
<feature type="repeat" description="LRR 2">
    <location>
        <begin position="83"/>
        <end position="104"/>
    </location>
</feature>
<feature type="repeat" description="LRR 3">
    <location>
        <begin position="107"/>
        <end position="129"/>
    </location>
</feature>
<feature type="repeat" description="LRR 4">
    <location>
        <begin position="132"/>
        <end position="153"/>
    </location>
</feature>
<feature type="repeat" description="LRR 5">
    <location>
        <begin position="156"/>
        <end position="177"/>
    </location>
</feature>
<feature type="repeat" description="LRR 6">
    <location>
        <begin position="180"/>
        <end position="201"/>
    </location>
</feature>
<feature type="repeat" description="LRR 7">
    <location>
        <begin position="204"/>
        <end position="225"/>
    </location>
</feature>
<feature type="repeat" description="LRR 8">
    <location>
        <begin position="228"/>
        <end position="249"/>
    </location>
</feature>
<feature type="domain" description="LRRCT">
    <location>
        <begin position="261"/>
        <end position="312"/>
    </location>
</feature>
<feature type="region of interest" description="Disordered" evidence="4">
    <location>
        <begin position="286"/>
        <end position="390"/>
    </location>
</feature>
<feature type="region of interest" description="Important for interaction with MAG" evidence="7">
    <location>
        <begin position="315"/>
        <end position="327"/>
    </location>
</feature>
<feature type="compositionally biased region" description="Basic and acidic residues" evidence="4">
    <location>
        <begin position="294"/>
        <end position="306"/>
    </location>
</feature>
<feature type="compositionally biased region" description="Basic and acidic residues" evidence="4">
    <location>
        <begin position="351"/>
        <end position="360"/>
    </location>
</feature>
<feature type="lipid moiety-binding region" description="GPI-anchor amidated cysteine" evidence="3">
    <location>
        <position position="390"/>
    </location>
</feature>
<feature type="glycosylation site" description="N-linked (GlcNAc...) asparagine" evidence="8 17">
    <location>
        <position position="50"/>
    </location>
</feature>
<feature type="glycosylation site" description="N-linked (GlcNAc...) asparagine" evidence="8 17">
    <location>
        <position position="93"/>
    </location>
</feature>
<feature type="glycosylation site" description="N-linked (GlcNAc...) asparagine" evidence="8 17">
    <location>
        <position position="236"/>
    </location>
</feature>
<feature type="disulfide bond" evidence="8 16 17">
    <location>
        <begin position="31"/>
        <end position="37"/>
    </location>
</feature>
<feature type="disulfide bond" evidence="8 16 17">
    <location>
        <begin position="35"/>
        <end position="46"/>
    </location>
</feature>
<feature type="disulfide bond" evidence="8 16 17">
    <location>
        <begin position="265"/>
        <end position="288"/>
    </location>
</feature>
<feature type="disulfide bond" evidence="8 16 17">
    <location>
        <begin position="267"/>
        <end position="310"/>
    </location>
</feature>
<feature type="strand" evidence="18">
    <location>
        <begin position="36"/>
        <end position="38"/>
    </location>
</feature>
<feature type="turn" evidence="18">
    <location>
        <begin position="39"/>
        <end position="42"/>
    </location>
</feature>
<feature type="strand" evidence="18">
    <location>
        <begin position="43"/>
        <end position="45"/>
    </location>
</feature>
<feature type="strand" evidence="18">
    <location>
        <begin position="64"/>
        <end position="66"/>
    </location>
</feature>
<feature type="strand" evidence="18">
    <location>
        <begin position="85"/>
        <end position="88"/>
    </location>
</feature>
<feature type="turn" evidence="18">
    <location>
        <begin position="99"/>
        <end position="104"/>
    </location>
</feature>
<feature type="strand" evidence="18">
    <location>
        <begin position="110"/>
        <end position="112"/>
    </location>
</feature>
<feature type="turn" evidence="18">
    <location>
        <begin position="124"/>
        <end position="129"/>
    </location>
</feature>
<feature type="strand" evidence="18">
    <location>
        <begin position="135"/>
        <end position="137"/>
    </location>
</feature>
<feature type="turn" evidence="18">
    <location>
        <begin position="148"/>
        <end position="153"/>
    </location>
</feature>
<feature type="strand" evidence="18">
    <location>
        <begin position="159"/>
        <end position="161"/>
    </location>
</feature>
<feature type="turn" evidence="18">
    <location>
        <begin position="172"/>
        <end position="177"/>
    </location>
</feature>
<feature type="strand" evidence="18">
    <location>
        <begin position="183"/>
        <end position="185"/>
    </location>
</feature>
<feature type="turn" evidence="18">
    <location>
        <begin position="196"/>
        <end position="201"/>
    </location>
</feature>
<feature type="strand" evidence="18">
    <location>
        <begin position="207"/>
        <end position="209"/>
    </location>
</feature>
<feature type="turn" evidence="18">
    <location>
        <begin position="220"/>
        <end position="225"/>
    </location>
</feature>
<feature type="strand" evidence="18">
    <location>
        <begin position="231"/>
        <end position="233"/>
    </location>
</feature>
<feature type="helix" evidence="18">
    <location>
        <begin position="244"/>
        <end position="248"/>
    </location>
</feature>
<feature type="strand" evidence="18">
    <location>
        <begin position="255"/>
        <end position="257"/>
    </location>
</feature>
<feature type="helix" evidence="18">
    <location>
        <begin position="267"/>
        <end position="269"/>
    </location>
</feature>
<feature type="helix" evidence="18">
    <location>
        <begin position="270"/>
        <end position="278"/>
    </location>
</feature>
<feature type="strand" evidence="18">
    <location>
        <begin position="287"/>
        <end position="291"/>
    </location>
</feature>
<feature type="helix" evidence="18">
    <location>
        <begin position="292"/>
        <end position="294"/>
    </location>
</feature>
<feature type="helix" evidence="18">
    <location>
        <begin position="299"/>
        <end position="301"/>
    </location>
</feature>
<feature type="helix" evidence="18">
    <location>
        <begin position="304"/>
        <end position="307"/>
    </location>
</feature>
<keyword id="KW-0002">3D-structure</keyword>
<keyword id="KW-1003">Cell membrane</keyword>
<keyword id="KW-0966">Cell projection</keyword>
<keyword id="KW-1015">Disulfide bond</keyword>
<keyword id="KW-0325">Glycoprotein</keyword>
<keyword id="KW-0336">GPI-anchor</keyword>
<keyword id="KW-0433">Leucine-rich repeat</keyword>
<keyword id="KW-0449">Lipoprotein</keyword>
<keyword id="KW-0472">Membrane</keyword>
<keyword id="KW-0675">Receptor</keyword>
<keyword id="KW-1185">Reference proteome</keyword>
<keyword id="KW-0677">Repeat</keyword>
<keyword id="KW-0732">Signal</keyword>
<evidence type="ECO:0000250" key="1">
    <source>
        <dbReference type="UniProtKB" id="Q7M6Z0"/>
    </source>
</evidence>
<evidence type="ECO:0000250" key="2">
    <source>
        <dbReference type="UniProtKB" id="Q86UN3"/>
    </source>
</evidence>
<evidence type="ECO:0000255" key="3"/>
<evidence type="ECO:0000256" key="4">
    <source>
        <dbReference type="SAM" id="MobiDB-lite"/>
    </source>
</evidence>
<evidence type="ECO:0000269" key="5">
    <source>
    </source>
</evidence>
<evidence type="ECO:0000269" key="6">
    <source>
    </source>
</evidence>
<evidence type="ECO:0000269" key="7">
    <source>
    </source>
</evidence>
<evidence type="ECO:0000269" key="8">
    <source>
    </source>
</evidence>
<evidence type="ECO:0000269" key="9">
    <source>
    </source>
</evidence>
<evidence type="ECO:0000269" key="10">
    <source>
    </source>
</evidence>
<evidence type="ECO:0000303" key="11">
    <source>
    </source>
</evidence>
<evidence type="ECO:0000303" key="12">
    <source>
    </source>
</evidence>
<evidence type="ECO:0000305" key="13"/>
<evidence type="ECO:0000312" key="14">
    <source>
        <dbReference type="EMBL" id="AAP21837.1"/>
    </source>
</evidence>
<evidence type="ECO:0000312" key="15">
    <source>
        <dbReference type="RGD" id="727797"/>
    </source>
</evidence>
<evidence type="ECO:0007744" key="16">
    <source>
        <dbReference type="PDB" id="4P8S"/>
    </source>
</evidence>
<evidence type="ECO:0007744" key="17">
    <source>
        <dbReference type="PDB" id="4P91"/>
    </source>
</evidence>
<evidence type="ECO:0007829" key="18">
    <source>
        <dbReference type="PDB" id="4P8S"/>
    </source>
</evidence>
<reference evidence="13 14" key="1">
    <citation type="journal article" date="2003" name="J. Neurochem.">
        <title>Characterization of two novel proteins, NgRH1 and NgRH2, structurally and biochemically homologous to the Nogo-66 receptor.</title>
        <authorList>
            <person name="Pignot V."/>
            <person name="Hein A.E."/>
            <person name="Barske C."/>
            <person name="Wiessner C."/>
            <person name="Walmsley A.R."/>
            <person name="Kaupmann K."/>
            <person name="Mayeur H."/>
            <person name="Sommer B."/>
            <person name="Mir A.K."/>
            <person name="Frentzel S."/>
        </authorList>
    </citation>
    <scope>NUCLEOTIDE SEQUENCE [MRNA]</scope>
    <scope>SUBCELLULAR LOCATION</scope>
    <scope>TISSUE SPECIFICITY</scope>
    <source>
        <strain evidence="14">Sprague-Dawley</strain>
    </source>
</reference>
<reference key="2">
    <citation type="journal article" date="2005" name="J. Neurosci.">
        <title>The Nogo-66 receptor homolog NgR2 is a sialic acid-dependent receptor selective for myelin-associated glycoprotein.</title>
        <authorList>
            <person name="Venkatesh K."/>
            <person name="Chivatakarn O."/>
            <person name="Lee H."/>
            <person name="Joshi P.S."/>
            <person name="Kantor D.B."/>
            <person name="Newman B.A."/>
            <person name="Mage R."/>
            <person name="Rader C."/>
            <person name="Giger R.J."/>
        </authorList>
    </citation>
    <scope>FUNCTION</scope>
    <scope>SUBCELLULAR LOCATION</scope>
    <scope>INTERACTION WITH MAG</scope>
    <scope>LACK OF INTERACTION WITH OMP AND RTN4</scope>
    <scope>TISSUE SPECIFICITY</scope>
    <scope>DEVELOPMENTAL STAGE</scope>
</reference>
<reference key="3">
    <citation type="journal article" date="2009" name="J. Neurosci.">
        <title>Molecular basis of the interactions of the Nogo-66 receptor and its homolog NgR2 with myelin-associated glycoprotein: development of NgROMNI-Fc, a novel antagonist of CNS myelin inhibition.</title>
        <authorList>
            <person name="Robak L.A."/>
            <person name="Venkatesh K."/>
            <person name="Lee H."/>
            <person name="Raiker S.J."/>
            <person name="Duan Y."/>
            <person name="Lee-Osbourne J."/>
            <person name="Hofer T."/>
            <person name="Mage R.G."/>
            <person name="Rader C."/>
            <person name="Giger R.J."/>
        </authorList>
    </citation>
    <scope>INTERACTION WITH MAG</scope>
    <scope>GLYCOSYLATION</scope>
    <scope>SUBCELLULAR LOCATION</scope>
</reference>
<reference key="4">
    <citation type="journal article" date="2012" name="Neuron">
        <title>The Nogo receptor family restricts synapse number in the developing hippocampus.</title>
        <authorList>
            <person name="Wills Z.P."/>
            <person name="Mandel-Brehm C."/>
            <person name="Mardinly A.R."/>
            <person name="McCord A.E."/>
            <person name="Giger R.J."/>
            <person name="Greenberg M.E."/>
        </authorList>
    </citation>
    <scope>FUNCTION</scope>
</reference>
<reference key="5">
    <citation type="journal article" date="2015" name="Cell Death Dis.">
        <title>Myelin-associated glycoprotein modulates apoptosis of motoneurons during early postnatal development via NgR/p75(NTR) receptor-mediated activation of RhoA signaling pathways.</title>
        <authorList>
            <person name="Palandri A."/>
            <person name="Salvador V.R."/>
            <person name="Wojnacki J."/>
            <person name="Vivinetto A.L."/>
            <person name="Schnaar R.L."/>
            <person name="Lopez P.H."/>
        </authorList>
    </citation>
    <scope>FUNCTION</scope>
</reference>
<reference key="6">
    <citation type="journal article" date="2011" name="Protein Sci.">
        <title>Crystal structure of the Nogo-receptor-2.</title>
        <authorList>
            <person name="Semavina M."/>
            <person name="Saha N."/>
            <person name="Kolev M.V."/>
            <person name="Goldgur Y."/>
            <person name="Giger R.J."/>
            <person name="Himanen J.P."/>
            <person name="Nikolov D.B."/>
        </authorList>
    </citation>
    <scope>X-RAY CRYSTALLOGRAPHY (1.80 ANGSTROMS) OF 29-310</scope>
    <scope>INTERACTION WITH MAG</scope>
    <scope>GLYCOSYLATION AT ASN-50; ASN-93 AND ASN-236</scope>
    <scope>DISULFIDE BONDS</scope>
</reference>
<proteinExistence type="evidence at protein level"/>
<gene>
    <name evidence="15" type="primary">Rtn4rl2</name>
    <name evidence="11 14" type="synonym">Ngrh1</name>
</gene>
<organism>
    <name type="scientific">Rattus norvegicus</name>
    <name type="common">Rat</name>
    <dbReference type="NCBI Taxonomy" id="10116"/>
    <lineage>
        <taxon>Eukaryota</taxon>
        <taxon>Metazoa</taxon>
        <taxon>Chordata</taxon>
        <taxon>Craniata</taxon>
        <taxon>Vertebrata</taxon>
        <taxon>Euteleostomi</taxon>
        <taxon>Mammalia</taxon>
        <taxon>Eutheria</taxon>
        <taxon>Euarchontoglires</taxon>
        <taxon>Glires</taxon>
        <taxon>Rodentia</taxon>
        <taxon>Myomorpha</taxon>
        <taxon>Muroidea</taxon>
        <taxon>Muridae</taxon>
        <taxon>Murinae</taxon>
        <taxon>Rattus</taxon>
    </lineage>
</organism>
<sequence length="420" mass="46184">MLPGLRRLLQGPASACLLLTLLALPPVTPSCPMLCTCYSSPPTVSCQANNFSSVPLSLPPSTQRLFLQNNLIRSLRPGTFGPNLLTLWLFSNNLSTIYPGTFRHLQALEELDLGDNRHLRSLEPDTFQGLERLQSLHLYRCQLSSLPGNIFRGLVSLQYLYLQENSLLHLQDDLFADLANLSHLFLHGNRLRLLTEHVFRGLGSLDRLLLHGNRLQGVHRAAFHGLSRLTILYLFNNSLASLPGEALADLPALEFLRLNANPWACDCRARPLWAWFQRARVSSSDVTCATPPERQGRDLRTLRDTDFQACPPPTPTRPGSRARGNSSSNHLYGVAEAGAPPADPSTLYRDLPAEDSRGRQGGDAPTEDDYWGGYGGEDQRGEQTCPGAACQAPADSRGPVLSAGLRTPLLCLLLLAPHHL</sequence>